<dbReference type="EC" id="2.3.1.225" evidence="2"/>
<dbReference type="EMBL" id="CR382130">
    <property type="protein sequence ID" value="CAG81316.1"/>
    <property type="status" value="ALT_INIT"/>
    <property type="molecule type" value="Genomic_DNA"/>
</dbReference>
<dbReference type="RefSeq" id="XP_503122.1">
    <property type="nucleotide sequence ID" value="XM_503122.1"/>
</dbReference>
<dbReference type="SMR" id="Q6C890"/>
<dbReference type="FunCoup" id="Q6C890">
    <property type="interactions" value="181"/>
</dbReference>
<dbReference type="STRING" id="284591.Q6C890"/>
<dbReference type="InParanoid" id="Q6C890"/>
<dbReference type="OrthoDB" id="124298at4891"/>
<dbReference type="Proteomes" id="UP000001300">
    <property type="component" value="Chromosome D"/>
</dbReference>
<dbReference type="GO" id="GO:0005783">
    <property type="term" value="C:endoplasmic reticulum"/>
    <property type="evidence" value="ECO:0000318"/>
    <property type="project" value="GO_Central"/>
</dbReference>
<dbReference type="GO" id="GO:0005789">
    <property type="term" value="C:endoplasmic reticulum membrane"/>
    <property type="evidence" value="ECO:0007669"/>
    <property type="project" value="UniProtKB-SubCell"/>
</dbReference>
<dbReference type="GO" id="GO:0005794">
    <property type="term" value="C:Golgi apparatus"/>
    <property type="evidence" value="ECO:0000318"/>
    <property type="project" value="GO_Central"/>
</dbReference>
<dbReference type="GO" id="GO:0019706">
    <property type="term" value="F:protein-cysteine S-palmitoyltransferase activity"/>
    <property type="evidence" value="ECO:0000318"/>
    <property type="project" value="GO_Central"/>
</dbReference>
<dbReference type="GO" id="GO:0006612">
    <property type="term" value="P:protein targeting to membrane"/>
    <property type="evidence" value="ECO:0000318"/>
    <property type="project" value="GO_Central"/>
</dbReference>
<dbReference type="InterPro" id="IPR001594">
    <property type="entry name" value="Palmitoyltrfase_DHHC"/>
</dbReference>
<dbReference type="InterPro" id="IPR039859">
    <property type="entry name" value="PFA4/ZDH16/20/ERF2-like"/>
</dbReference>
<dbReference type="PANTHER" id="PTHR22883:SF43">
    <property type="entry name" value="PALMITOYLTRANSFERASE APP"/>
    <property type="match status" value="1"/>
</dbReference>
<dbReference type="PANTHER" id="PTHR22883">
    <property type="entry name" value="ZINC FINGER DHHC DOMAIN CONTAINING PROTEIN"/>
    <property type="match status" value="1"/>
</dbReference>
<dbReference type="Pfam" id="PF01529">
    <property type="entry name" value="DHHC"/>
    <property type="match status" value="1"/>
</dbReference>
<dbReference type="PROSITE" id="PS50216">
    <property type="entry name" value="DHHC"/>
    <property type="match status" value="1"/>
</dbReference>
<reference key="1">
    <citation type="journal article" date="2004" name="Nature">
        <title>Genome evolution in yeasts.</title>
        <authorList>
            <person name="Dujon B."/>
            <person name="Sherman D."/>
            <person name="Fischer G."/>
            <person name="Durrens P."/>
            <person name="Casaregola S."/>
            <person name="Lafontaine I."/>
            <person name="de Montigny J."/>
            <person name="Marck C."/>
            <person name="Neuveglise C."/>
            <person name="Talla E."/>
            <person name="Goffard N."/>
            <person name="Frangeul L."/>
            <person name="Aigle M."/>
            <person name="Anthouard V."/>
            <person name="Babour A."/>
            <person name="Barbe V."/>
            <person name="Barnay S."/>
            <person name="Blanchin S."/>
            <person name="Beckerich J.-M."/>
            <person name="Beyne E."/>
            <person name="Bleykasten C."/>
            <person name="Boisrame A."/>
            <person name="Boyer J."/>
            <person name="Cattolico L."/>
            <person name="Confanioleri F."/>
            <person name="de Daruvar A."/>
            <person name="Despons L."/>
            <person name="Fabre E."/>
            <person name="Fairhead C."/>
            <person name="Ferry-Dumazet H."/>
            <person name="Groppi A."/>
            <person name="Hantraye F."/>
            <person name="Hennequin C."/>
            <person name="Jauniaux N."/>
            <person name="Joyet P."/>
            <person name="Kachouri R."/>
            <person name="Kerrest A."/>
            <person name="Koszul R."/>
            <person name="Lemaire M."/>
            <person name="Lesur I."/>
            <person name="Ma L."/>
            <person name="Muller H."/>
            <person name="Nicaud J.-M."/>
            <person name="Nikolski M."/>
            <person name="Oztas S."/>
            <person name="Ozier-Kalogeropoulos O."/>
            <person name="Pellenz S."/>
            <person name="Potier S."/>
            <person name="Richard G.-F."/>
            <person name="Straub M.-L."/>
            <person name="Suleau A."/>
            <person name="Swennen D."/>
            <person name="Tekaia F."/>
            <person name="Wesolowski-Louvel M."/>
            <person name="Westhof E."/>
            <person name="Wirth B."/>
            <person name="Zeniou-Meyer M."/>
            <person name="Zivanovic Y."/>
            <person name="Bolotin-Fukuhara M."/>
            <person name="Thierry A."/>
            <person name="Bouchier C."/>
            <person name="Caudron B."/>
            <person name="Scarpelli C."/>
            <person name="Gaillardin C."/>
            <person name="Weissenbach J."/>
            <person name="Wincker P."/>
            <person name="Souciet J.-L."/>
        </authorList>
    </citation>
    <scope>NUCLEOTIDE SEQUENCE [LARGE SCALE GENOMIC DNA]</scope>
    <source>
        <strain>CLIB 122 / E 150</strain>
    </source>
</reference>
<sequence>MDFYTPPTTAGPPTRGSPESVPTTAASTFPLRKRTRAHLRARDKSDGPAPSSRGTSDRLWSWVFLKQPLSLPEHNYQAHLGNNVFLIGGRFLSARQKPLNIAVLCVILILGGLYYGFVAPWTWNHISPAIPAVFTYIFLLCVASFLRASFSDPGILPRNIHLTDRIADGSIPNEYSVEPGIDAFDPRKNTTSLSCFKQPESSENLVYLKYCSTCKIWRPPRASHCSDCDNCVDFHDHHCIWLNNCVGRKNYRYFVAFVMTGGLCGLYIVGNSIAHVICYKRHMHMTIAESLRHRPMPLVMIFLGFLGAGYPLALVGFHLWIASRGESTHEFVSMNPVTKHVVDGHVGVTLSKCKVMGSHDGFKRFSDAVLAVVCARLCAHVSPHSNPVTKQTTPQGVQKSTFRHWKRF</sequence>
<evidence type="ECO:0000250" key="1">
    <source>
        <dbReference type="UniProtKB" id="Q06551"/>
    </source>
</evidence>
<evidence type="ECO:0000250" key="2">
    <source>
        <dbReference type="UniProtKB" id="Q8VDZ4"/>
    </source>
</evidence>
<evidence type="ECO:0000250" key="3">
    <source>
        <dbReference type="UniProtKB" id="Q9UIJ5"/>
    </source>
</evidence>
<evidence type="ECO:0000255" key="4"/>
<evidence type="ECO:0000255" key="5">
    <source>
        <dbReference type="PROSITE-ProRule" id="PRU00067"/>
    </source>
</evidence>
<evidence type="ECO:0000256" key="6">
    <source>
        <dbReference type="SAM" id="MobiDB-lite"/>
    </source>
</evidence>
<evidence type="ECO:0000305" key="7"/>
<name>ERFB_YARLI</name>
<keyword id="KW-0012">Acyltransferase</keyword>
<keyword id="KW-0256">Endoplasmic reticulum</keyword>
<keyword id="KW-0449">Lipoprotein</keyword>
<keyword id="KW-0472">Membrane</keyword>
<keyword id="KW-0564">Palmitate</keyword>
<keyword id="KW-1185">Reference proteome</keyword>
<keyword id="KW-0808">Transferase</keyword>
<keyword id="KW-0812">Transmembrane</keyword>
<keyword id="KW-1133">Transmembrane helix</keyword>
<accession>Q6C890</accession>
<feature type="chain" id="PRO_0000212947" description="Palmitoyltransferase ERF2">
    <location>
        <begin position="1"/>
        <end position="408"/>
    </location>
</feature>
<feature type="topological domain" description="Cytoplasmic" evidence="4">
    <location>
        <begin position="1"/>
        <end position="100"/>
    </location>
</feature>
<feature type="transmembrane region" description="Helical" evidence="4">
    <location>
        <begin position="101"/>
        <end position="121"/>
    </location>
</feature>
<feature type="topological domain" description="Lumenal" evidence="4">
    <location>
        <begin position="122"/>
        <end position="125"/>
    </location>
</feature>
<feature type="transmembrane region" description="Helical" evidence="4">
    <location>
        <begin position="126"/>
        <end position="146"/>
    </location>
</feature>
<feature type="topological domain" description="Cytoplasmic" evidence="4">
    <location>
        <begin position="147"/>
        <end position="253"/>
    </location>
</feature>
<feature type="transmembrane region" description="Helical" evidence="4">
    <location>
        <begin position="254"/>
        <end position="274"/>
    </location>
</feature>
<feature type="topological domain" description="Lumenal" evidence="4">
    <location>
        <begin position="275"/>
        <end position="296"/>
    </location>
</feature>
<feature type="transmembrane region" description="Helical" evidence="4">
    <location>
        <begin position="297"/>
        <end position="317"/>
    </location>
</feature>
<feature type="topological domain" description="Cytoplasmic" evidence="4">
    <location>
        <begin position="318"/>
        <end position="408"/>
    </location>
</feature>
<feature type="domain" description="DHHC" evidence="5">
    <location>
        <begin position="209"/>
        <end position="259"/>
    </location>
</feature>
<feature type="region of interest" description="Disordered" evidence="6">
    <location>
        <begin position="1"/>
        <end position="55"/>
    </location>
</feature>
<feature type="compositionally biased region" description="Low complexity" evidence="6">
    <location>
        <begin position="1"/>
        <end position="14"/>
    </location>
</feature>
<feature type="active site" description="S-palmitoyl cysteine intermediate" evidence="2">
    <location>
        <position position="239"/>
    </location>
</feature>
<organism>
    <name type="scientific">Yarrowia lipolytica (strain CLIB 122 / E 150)</name>
    <name type="common">Yeast</name>
    <name type="synonym">Candida lipolytica</name>
    <dbReference type="NCBI Taxonomy" id="284591"/>
    <lineage>
        <taxon>Eukaryota</taxon>
        <taxon>Fungi</taxon>
        <taxon>Dikarya</taxon>
        <taxon>Ascomycota</taxon>
        <taxon>Saccharomycotina</taxon>
        <taxon>Dipodascomycetes</taxon>
        <taxon>Dipodascales</taxon>
        <taxon>Dipodascales incertae sedis</taxon>
        <taxon>Yarrowia</taxon>
    </lineage>
</organism>
<gene>
    <name type="primary">ERF2</name>
    <name type="ordered locus">YALI0D21670g</name>
</gene>
<protein>
    <recommendedName>
        <fullName>Palmitoyltransferase ERF2</fullName>
        <ecNumber evidence="2">2.3.1.225</ecNumber>
    </recommendedName>
    <alternativeName>
        <fullName>DHHC cysteine-rich domain-containing protein ERF2</fullName>
    </alternativeName>
    <alternativeName>
        <fullName>Ras protein acyltransferase</fullName>
    </alternativeName>
</protein>
<proteinExistence type="inferred from homology"/>
<comment type="function">
    <text evidence="1">The ERF2-ERF4 complex is a palmitoyltransferase specific for Ras proteins.</text>
</comment>
<comment type="catalytic activity">
    <reaction evidence="2">
        <text>L-cysteinyl-[protein] + hexadecanoyl-CoA = S-hexadecanoyl-L-cysteinyl-[protein] + CoA</text>
        <dbReference type="Rhea" id="RHEA:36683"/>
        <dbReference type="Rhea" id="RHEA-COMP:10131"/>
        <dbReference type="Rhea" id="RHEA-COMP:11032"/>
        <dbReference type="ChEBI" id="CHEBI:29950"/>
        <dbReference type="ChEBI" id="CHEBI:57287"/>
        <dbReference type="ChEBI" id="CHEBI:57379"/>
        <dbReference type="ChEBI" id="CHEBI:74151"/>
        <dbReference type="EC" id="2.3.1.225"/>
    </reaction>
</comment>
<comment type="subunit">
    <text evidence="1">Interacts with ERF4.</text>
</comment>
<comment type="subcellular location">
    <subcellularLocation>
        <location evidence="1">Endoplasmic reticulum membrane</location>
        <topology evidence="1">Multi-pass membrane protein</topology>
    </subcellularLocation>
</comment>
<comment type="domain">
    <text evidence="1">The DHHC domain is required for palmitoyltransferase activity.</text>
</comment>
<comment type="PTM">
    <text evidence="3">Autopalmitoylated.</text>
</comment>
<comment type="similarity">
    <text evidence="7">Belongs to the DHHC palmitoyltransferase family. ERF2/ZDHHC9 subfamily.</text>
</comment>
<comment type="sequence caution" evidence="7">
    <conflict type="erroneous initiation">
        <sequence resource="EMBL-CDS" id="CAG81316"/>
    </conflict>
</comment>